<reference key="1">
    <citation type="journal article" date="2002" name="Proc. Natl. Acad. Sci. U.S.A.">
        <title>Extensive mosaic structure revealed by the complete genome sequence of uropathogenic Escherichia coli.</title>
        <authorList>
            <person name="Welch R.A."/>
            <person name="Burland V."/>
            <person name="Plunkett G. III"/>
            <person name="Redford P."/>
            <person name="Roesch P."/>
            <person name="Rasko D."/>
            <person name="Buckles E.L."/>
            <person name="Liou S.-R."/>
            <person name="Boutin A."/>
            <person name="Hackett J."/>
            <person name="Stroud D."/>
            <person name="Mayhew G.F."/>
            <person name="Rose D.J."/>
            <person name="Zhou S."/>
            <person name="Schwartz D.C."/>
            <person name="Perna N.T."/>
            <person name="Mobley H.L.T."/>
            <person name="Donnenberg M.S."/>
            <person name="Blattner F.R."/>
        </authorList>
    </citation>
    <scope>NUCLEOTIDE SEQUENCE [LARGE SCALE GENOMIC DNA]</scope>
    <source>
        <strain>CFT073 / ATCC 700928 / UPEC</strain>
    </source>
</reference>
<name>CAIB_ECOL6</name>
<sequence>MDHLPMPKFGPLAGLRVVFSGIEIAGPFAGQMFAEWGAEVIWIENVAWADTIRVQPNYPQLSRRNLHALSLNIFKDEGREAFLKLMETTDIFIEASKGPAFARRGITDEVLWQHNPKLVIAHLSGFGQYGTEEYTNLPAYNTIAQAFSGYLIQNGDVDQPMPAFPYTADYFSGLTATTAALAALHKVRETGKGESIDIAMYEVMLRMGQYFMMDYFNGGEMCPRMTKGKDPYYAGCGLYKCADGYIVMELVGITQIAECFKDIGLAHLLGTPEIPEGTQLIHRIECPYGPLVEEKLDAWLAAHTIAEVKERFAELNIACAKVLTVPELESNPQYVARESITQWQTMDGRTCKGPNIMPKFKNNPGQIWRGMPSHGMDTAAILKNIGYSENDIQELVSKGLAKVED</sequence>
<feature type="chain" id="PRO_0000194710" description="L-carnitine CoA-transferase">
    <location>
        <begin position="1"/>
        <end position="405"/>
    </location>
</feature>
<feature type="active site" description="Nucleophile" evidence="1">
    <location>
        <position position="169"/>
    </location>
</feature>
<feature type="binding site" evidence="1">
    <location>
        <position position="97"/>
    </location>
    <ligand>
        <name>CoA</name>
        <dbReference type="ChEBI" id="CHEBI:57287"/>
    </ligand>
</feature>
<feature type="binding site" evidence="1">
    <location>
        <position position="104"/>
    </location>
    <ligand>
        <name>CoA</name>
        <dbReference type="ChEBI" id="CHEBI:57287"/>
    </ligand>
</feature>
<evidence type="ECO:0000255" key="1">
    <source>
        <dbReference type="HAMAP-Rule" id="MF_01050"/>
    </source>
</evidence>
<organism>
    <name type="scientific">Escherichia coli O6:H1 (strain CFT073 / ATCC 700928 / UPEC)</name>
    <dbReference type="NCBI Taxonomy" id="199310"/>
    <lineage>
        <taxon>Bacteria</taxon>
        <taxon>Pseudomonadati</taxon>
        <taxon>Pseudomonadota</taxon>
        <taxon>Gammaproteobacteria</taxon>
        <taxon>Enterobacterales</taxon>
        <taxon>Enterobacteriaceae</taxon>
        <taxon>Escherichia</taxon>
    </lineage>
</organism>
<comment type="function">
    <text evidence="1">Catalyzes the reversible transfer of the CoA moiety from gamma-butyrobetainyl-CoA to L-carnitine to generate L-carnitinyl-CoA and gamma-butyrobetaine. Is also able to catalyze the reversible transfer of the CoA moiety from gamma-butyrobetainyl-CoA or L-carnitinyl-CoA to crotonobetaine to generate crotonobetainyl-CoA.</text>
</comment>
<comment type="catalytic activity">
    <reaction evidence="1">
        <text>crotonobetainyl-CoA + (R)-carnitine = crotonobetaine + (R)-carnitinyl-CoA</text>
        <dbReference type="Rhea" id="RHEA:28526"/>
        <dbReference type="ChEBI" id="CHEBI:16347"/>
        <dbReference type="ChEBI" id="CHEBI:17237"/>
        <dbReference type="ChEBI" id="CHEBI:60932"/>
        <dbReference type="ChEBI" id="CHEBI:60933"/>
        <dbReference type="EC" id="2.8.3.21"/>
    </reaction>
</comment>
<comment type="catalytic activity">
    <reaction evidence="1">
        <text>4-(trimethylamino)butanoyl-CoA + (R)-carnitine = (R)-carnitinyl-CoA + 4-(trimethylamino)butanoate</text>
        <dbReference type="Rhea" id="RHEA:28418"/>
        <dbReference type="ChEBI" id="CHEBI:16244"/>
        <dbReference type="ChEBI" id="CHEBI:16347"/>
        <dbReference type="ChEBI" id="CHEBI:60932"/>
        <dbReference type="ChEBI" id="CHEBI:61513"/>
        <dbReference type="EC" id="2.8.3.21"/>
    </reaction>
</comment>
<comment type="pathway">
    <text evidence="1">Amine and polyamine metabolism; carnitine metabolism.</text>
</comment>
<comment type="subunit">
    <text evidence="1">Homodimer.</text>
</comment>
<comment type="subcellular location">
    <subcellularLocation>
        <location evidence="1">Cytoplasm</location>
    </subcellularLocation>
</comment>
<comment type="similarity">
    <text evidence="1">Belongs to the CoA-transferase III family. CaiB subfamily.</text>
</comment>
<gene>
    <name evidence="1" type="primary">caiB</name>
    <name type="ordered locus">c0047</name>
</gene>
<dbReference type="EC" id="2.8.3.21" evidence="1"/>
<dbReference type="EMBL" id="AE014075">
    <property type="protein sequence ID" value="AAN78545.1"/>
    <property type="molecule type" value="Genomic_DNA"/>
</dbReference>
<dbReference type="RefSeq" id="WP_000349942.1">
    <property type="nucleotide sequence ID" value="NZ_CP051263.1"/>
</dbReference>
<dbReference type="SMR" id="Q8FLA4"/>
<dbReference type="STRING" id="199310.c0047"/>
<dbReference type="KEGG" id="ecc:c0047"/>
<dbReference type="eggNOG" id="COG1804">
    <property type="taxonomic scope" value="Bacteria"/>
</dbReference>
<dbReference type="HOGENOM" id="CLU_033975_2_0_6"/>
<dbReference type="BioCyc" id="ECOL199310:C0047-MONOMER"/>
<dbReference type="UniPathway" id="UPA00117"/>
<dbReference type="Proteomes" id="UP000001410">
    <property type="component" value="Chromosome"/>
</dbReference>
<dbReference type="GO" id="GO:0005737">
    <property type="term" value="C:cytoplasm"/>
    <property type="evidence" value="ECO:0007669"/>
    <property type="project" value="UniProtKB-SubCell"/>
</dbReference>
<dbReference type="GO" id="GO:0008735">
    <property type="term" value="F:L-carnitine CoA-transferase activity"/>
    <property type="evidence" value="ECO:0007669"/>
    <property type="project" value="RHEA"/>
</dbReference>
<dbReference type="GO" id="GO:0009437">
    <property type="term" value="P:carnitine metabolic process"/>
    <property type="evidence" value="ECO:0007669"/>
    <property type="project" value="UniProtKB-UniRule"/>
</dbReference>
<dbReference type="FunFam" id="3.30.1540.10:FF:000001">
    <property type="entry name" value="L-carnitine CoA-transferase"/>
    <property type="match status" value="1"/>
</dbReference>
<dbReference type="Gene3D" id="3.40.50.10540">
    <property type="entry name" value="Crotonobetainyl-coa:carnitine coa-transferase, domain 1"/>
    <property type="match status" value="1"/>
</dbReference>
<dbReference type="Gene3D" id="3.30.1540.10">
    <property type="entry name" value="formyl-coa transferase, domain 3"/>
    <property type="match status" value="1"/>
</dbReference>
<dbReference type="HAMAP" id="MF_01050">
    <property type="entry name" value="CaiB"/>
    <property type="match status" value="1"/>
</dbReference>
<dbReference type="InterPro" id="IPR050509">
    <property type="entry name" value="CoA-transferase_III"/>
</dbReference>
<dbReference type="InterPro" id="IPR023452">
    <property type="entry name" value="CoA-Trfase_CaiB"/>
</dbReference>
<dbReference type="InterPro" id="IPR003673">
    <property type="entry name" value="CoA-Trfase_fam_III"/>
</dbReference>
<dbReference type="InterPro" id="IPR044855">
    <property type="entry name" value="CoA-Trfase_III_dom3_sf"/>
</dbReference>
<dbReference type="InterPro" id="IPR023606">
    <property type="entry name" value="CoA-Trfase_III_dom_1_sf"/>
</dbReference>
<dbReference type="NCBIfam" id="NF002914">
    <property type="entry name" value="PRK03525.1"/>
    <property type="match status" value="1"/>
</dbReference>
<dbReference type="PANTHER" id="PTHR48228:SF6">
    <property type="entry name" value="L-CARNITINE COA-TRANSFERASE"/>
    <property type="match status" value="1"/>
</dbReference>
<dbReference type="PANTHER" id="PTHR48228">
    <property type="entry name" value="SUCCINYL-COA--D-CITRAMALATE COA-TRANSFERASE"/>
    <property type="match status" value="1"/>
</dbReference>
<dbReference type="Pfam" id="PF02515">
    <property type="entry name" value="CoA_transf_3"/>
    <property type="match status" value="1"/>
</dbReference>
<dbReference type="SUPFAM" id="SSF89796">
    <property type="entry name" value="CoA-transferase family III (CaiB/BaiF)"/>
    <property type="match status" value="1"/>
</dbReference>
<accession>Q8FLA4</accession>
<protein>
    <recommendedName>
        <fullName evidence="1">L-carnitine CoA-transferase</fullName>
        <ecNumber evidence="1">2.8.3.21</ecNumber>
    </recommendedName>
    <alternativeName>
        <fullName evidence="1">Crotonobetainyl-CoA:carnitine CoA-transferase</fullName>
    </alternativeName>
</protein>
<keyword id="KW-0963">Cytoplasm</keyword>
<keyword id="KW-1185">Reference proteome</keyword>
<keyword id="KW-0808">Transferase</keyword>
<proteinExistence type="inferred from homology"/>